<feature type="chain" id="PRO_1000061236" description="GMP reductase">
    <location>
        <begin position="1"/>
        <end position="347"/>
    </location>
</feature>
<feature type="active site" description="Thioimidate intermediate" evidence="1">
    <location>
        <position position="186"/>
    </location>
</feature>
<feature type="binding site" evidence="1">
    <location>
        <begin position="108"/>
        <end position="131"/>
    </location>
    <ligand>
        <name>NADP(+)</name>
        <dbReference type="ChEBI" id="CHEBI:58349"/>
    </ligand>
</feature>
<feature type="binding site" evidence="1">
    <location>
        <position position="181"/>
    </location>
    <ligand>
        <name>K(+)</name>
        <dbReference type="ChEBI" id="CHEBI:29103"/>
    </ligand>
</feature>
<feature type="binding site" evidence="1">
    <location>
        <position position="183"/>
    </location>
    <ligand>
        <name>K(+)</name>
        <dbReference type="ChEBI" id="CHEBI:29103"/>
    </ligand>
</feature>
<feature type="binding site" evidence="1">
    <location>
        <begin position="216"/>
        <end position="239"/>
    </location>
    <ligand>
        <name>NADP(+)</name>
        <dbReference type="ChEBI" id="CHEBI:58349"/>
    </ligand>
</feature>
<gene>
    <name evidence="1" type="primary">guaC</name>
    <name type="ordered locus">EcHS_A0109</name>
</gene>
<accession>A7ZW55</accession>
<proteinExistence type="inferred from homology"/>
<sequence>MRIEEDLKLGFKDVLIRPKRSTLKSRSDVELERQFTFKHSGQSWSGVPIIAANMDTVGTFSMASALASFDILTAVHKHYSVEEWQAFINNSSADVLKHVMVSTGTSDADFEKTKQILDLNPALNFVCIDVANGYSEHFVQFVAKAREAWPTKTICAGNVVTGEMCEELILSGADIVKVGIGPGSVCTTRVKTGVGYPQLSAVIECADAAHGLGGMIVSDGGCTTPGDVAKAFGGGADFVMLGGMLAGHEESGGRIVEENGEKFMLFYGMSSESAMKRHVGGVAEYRAAEGKTVKLPLRGPVENTARDILGGLRSACTYVGASRLKELTKRTTFIRVQEQENRIFNNL</sequence>
<protein>
    <recommendedName>
        <fullName evidence="1">GMP reductase</fullName>
        <ecNumber evidence="1">1.7.1.7</ecNumber>
    </recommendedName>
    <alternativeName>
        <fullName evidence="1">Guanosine 5'-monophosphate oxidoreductase</fullName>
        <shortName evidence="1">Guanosine monophosphate reductase</shortName>
    </alternativeName>
</protein>
<keyword id="KW-0479">Metal-binding</keyword>
<keyword id="KW-0521">NADP</keyword>
<keyword id="KW-0560">Oxidoreductase</keyword>
<keyword id="KW-0630">Potassium</keyword>
<comment type="function">
    <text evidence="1">Catalyzes the irreversible NADPH-dependent deamination of GMP to IMP. It functions in the conversion of nucleobase, nucleoside and nucleotide derivatives of G to A nucleotides, and in maintaining the intracellular balance of A and G nucleotides.</text>
</comment>
<comment type="catalytic activity">
    <reaction evidence="1">
        <text>IMP + NH4(+) + NADP(+) = GMP + NADPH + 2 H(+)</text>
        <dbReference type="Rhea" id="RHEA:17185"/>
        <dbReference type="ChEBI" id="CHEBI:15378"/>
        <dbReference type="ChEBI" id="CHEBI:28938"/>
        <dbReference type="ChEBI" id="CHEBI:57783"/>
        <dbReference type="ChEBI" id="CHEBI:58053"/>
        <dbReference type="ChEBI" id="CHEBI:58115"/>
        <dbReference type="ChEBI" id="CHEBI:58349"/>
        <dbReference type="EC" id="1.7.1.7"/>
    </reaction>
</comment>
<comment type="subunit">
    <text evidence="1">Homotetramer.</text>
</comment>
<comment type="similarity">
    <text evidence="1">Belongs to the IMPDH/GMPR family. GuaC type 1 subfamily.</text>
</comment>
<reference key="1">
    <citation type="journal article" date="2008" name="J. Bacteriol.">
        <title>The pangenome structure of Escherichia coli: comparative genomic analysis of E. coli commensal and pathogenic isolates.</title>
        <authorList>
            <person name="Rasko D.A."/>
            <person name="Rosovitz M.J."/>
            <person name="Myers G.S.A."/>
            <person name="Mongodin E.F."/>
            <person name="Fricke W.F."/>
            <person name="Gajer P."/>
            <person name="Crabtree J."/>
            <person name="Sebaihia M."/>
            <person name="Thomson N.R."/>
            <person name="Chaudhuri R."/>
            <person name="Henderson I.R."/>
            <person name="Sperandio V."/>
            <person name="Ravel J."/>
        </authorList>
    </citation>
    <scope>NUCLEOTIDE SEQUENCE [LARGE SCALE GENOMIC DNA]</scope>
    <source>
        <strain>HS</strain>
    </source>
</reference>
<organism>
    <name type="scientific">Escherichia coli O9:H4 (strain HS)</name>
    <dbReference type="NCBI Taxonomy" id="331112"/>
    <lineage>
        <taxon>Bacteria</taxon>
        <taxon>Pseudomonadati</taxon>
        <taxon>Pseudomonadota</taxon>
        <taxon>Gammaproteobacteria</taxon>
        <taxon>Enterobacterales</taxon>
        <taxon>Enterobacteriaceae</taxon>
        <taxon>Escherichia</taxon>
    </lineage>
</organism>
<evidence type="ECO:0000255" key="1">
    <source>
        <dbReference type="HAMAP-Rule" id="MF_00596"/>
    </source>
</evidence>
<name>GUAC_ECOHS</name>
<dbReference type="EC" id="1.7.1.7" evidence="1"/>
<dbReference type="EMBL" id="CP000802">
    <property type="protein sequence ID" value="ABV04509.1"/>
    <property type="molecule type" value="Genomic_DNA"/>
</dbReference>
<dbReference type="RefSeq" id="WP_001217338.1">
    <property type="nucleotide sequence ID" value="NC_009800.1"/>
</dbReference>
<dbReference type="SMR" id="A7ZW55"/>
<dbReference type="GeneID" id="93777331"/>
<dbReference type="KEGG" id="ecx:EcHS_A0109"/>
<dbReference type="HOGENOM" id="CLU_022552_5_3_6"/>
<dbReference type="GO" id="GO:0005829">
    <property type="term" value="C:cytosol"/>
    <property type="evidence" value="ECO:0007669"/>
    <property type="project" value="TreeGrafter"/>
</dbReference>
<dbReference type="GO" id="GO:1902560">
    <property type="term" value="C:GMP reductase complex"/>
    <property type="evidence" value="ECO:0007669"/>
    <property type="project" value="InterPro"/>
</dbReference>
<dbReference type="GO" id="GO:0003920">
    <property type="term" value="F:GMP reductase activity"/>
    <property type="evidence" value="ECO:0007669"/>
    <property type="project" value="UniProtKB-UniRule"/>
</dbReference>
<dbReference type="GO" id="GO:0046872">
    <property type="term" value="F:metal ion binding"/>
    <property type="evidence" value="ECO:0007669"/>
    <property type="project" value="UniProtKB-KW"/>
</dbReference>
<dbReference type="GO" id="GO:0006163">
    <property type="term" value="P:purine nucleotide metabolic process"/>
    <property type="evidence" value="ECO:0007669"/>
    <property type="project" value="UniProtKB-UniRule"/>
</dbReference>
<dbReference type="CDD" id="cd00381">
    <property type="entry name" value="IMPDH"/>
    <property type="match status" value="1"/>
</dbReference>
<dbReference type="FunFam" id="3.20.20.70:FF:000012">
    <property type="entry name" value="GMP reductase"/>
    <property type="match status" value="1"/>
</dbReference>
<dbReference type="Gene3D" id="3.20.20.70">
    <property type="entry name" value="Aldolase class I"/>
    <property type="match status" value="1"/>
</dbReference>
<dbReference type="HAMAP" id="MF_00596">
    <property type="entry name" value="GMP_reduct_type1"/>
    <property type="match status" value="1"/>
</dbReference>
<dbReference type="InterPro" id="IPR013785">
    <property type="entry name" value="Aldolase_TIM"/>
</dbReference>
<dbReference type="InterPro" id="IPR050139">
    <property type="entry name" value="GMP_reductase"/>
</dbReference>
<dbReference type="InterPro" id="IPR005993">
    <property type="entry name" value="GMPR"/>
</dbReference>
<dbReference type="InterPro" id="IPR015875">
    <property type="entry name" value="IMP_DH/GMP_Rdtase_CS"/>
</dbReference>
<dbReference type="InterPro" id="IPR001093">
    <property type="entry name" value="IMP_DH_GMPRt"/>
</dbReference>
<dbReference type="NCBIfam" id="TIGR01305">
    <property type="entry name" value="GMP_reduct_1"/>
    <property type="match status" value="1"/>
</dbReference>
<dbReference type="NCBIfam" id="NF003470">
    <property type="entry name" value="PRK05096.1"/>
    <property type="match status" value="1"/>
</dbReference>
<dbReference type="PANTHER" id="PTHR43170">
    <property type="entry name" value="GMP REDUCTASE"/>
    <property type="match status" value="1"/>
</dbReference>
<dbReference type="PANTHER" id="PTHR43170:SF5">
    <property type="entry name" value="GMP REDUCTASE"/>
    <property type="match status" value="1"/>
</dbReference>
<dbReference type="Pfam" id="PF00478">
    <property type="entry name" value="IMPDH"/>
    <property type="match status" value="1"/>
</dbReference>
<dbReference type="PIRSF" id="PIRSF000235">
    <property type="entry name" value="GMP_reductase"/>
    <property type="match status" value="1"/>
</dbReference>
<dbReference type="SMART" id="SM01240">
    <property type="entry name" value="IMPDH"/>
    <property type="match status" value="1"/>
</dbReference>
<dbReference type="SUPFAM" id="SSF51412">
    <property type="entry name" value="Inosine monophosphate dehydrogenase (IMPDH)"/>
    <property type="match status" value="1"/>
</dbReference>
<dbReference type="PROSITE" id="PS00487">
    <property type="entry name" value="IMP_DH_GMP_RED"/>
    <property type="match status" value="1"/>
</dbReference>